<reference key="1">
    <citation type="submission" date="2006-11" db="EMBL/GenBank/DDBJ databases">
        <title>Sequence of Campylobacter fetus subsp. fetus 82-40.</title>
        <authorList>
            <person name="Fouts D.E."/>
            <person name="Nelson K.E."/>
        </authorList>
    </citation>
    <scope>NUCLEOTIDE SEQUENCE [LARGE SCALE GENOMIC DNA]</scope>
    <source>
        <strain>82-40</strain>
    </source>
</reference>
<feature type="chain" id="PRO_1000020041" description="Methionyl-tRNA formyltransferase">
    <location>
        <begin position="1"/>
        <end position="304"/>
    </location>
</feature>
<feature type="binding site" evidence="1">
    <location>
        <begin position="111"/>
        <end position="114"/>
    </location>
    <ligand>
        <name>(6S)-5,6,7,8-tetrahydrofolate</name>
        <dbReference type="ChEBI" id="CHEBI:57453"/>
    </ligand>
</feature>
<protein>
    <recommendedName>
        <fullName evidence="1">Methionyl-tRNA formyltransferase</fullName>
        <ecNumber evidence="1">2.1.2.9</ecNumber>
    </recommendedName>
</protein>
<name>FMT_CAMFF</name>
<keyword id="KW-0648">Protein biosynthesis</keyword>
<keyword id="KW-0808">Transferase</keyword>
<gene>
    <name evidence="1" type="primary">fmt</name>
    <name type="ordered locus">CFF8240_1534</name>
</gene>
<evidence type="ECO:0000255" key="1">
    <source>
        <dbReference type="HAMAP-Rule" id="MF_00182"/>
    </source>
</evidence>
<organism>
    <name type="scientific">Campylobacter fetus subsp. fetus (strain 82-40)</name>
    <dbReference type="NCBI Taxonomy" id="360106"/>
    <lineage>
        <taxon>Bacteria</taxon>
        <taxon>Pseudomonadati</taxon>
        <taxon>Campylobacterota</taxon>
        <taxon>Epsilonproteobacteria</taxon>
        <taxon>Campylobacterales</taxon>
        <taxon>Campylobacteraceae</taxon>
        <taxon>Campylobacter</taxon>
    </lineage>
</organism>
<sequence length="304" mass="33197">MKNIVFMGTPDYASVILEAILKNGGYNVVAVFTQPDRPVGRKAILTPPEVKKTVLQSGLDIPIFQPLNLKDSSTVNDIKALKPNFIVVAAYGQILPKDILDIAPCINLHASLLPKFRGASPIQEAILRGELLSGVTAMRMGVGLDDGDILGFSVIEIPNLKSSQLFCELAKMAAKLTIKILNEFESISPIAQFHALSSKCGKVHKEDGLIDIKLQTPKIIESKFRAYYPWPGLYLENGVKIWDMEISNLKGENGYVLSIDYDGFTIGVNGGSIKIKSLQESGKKMVNAKDYINGKRLGVGSKFC</sequence>
<accession>A0RR35</accession>
<proteinExistence type="inferred from homology"/>
<dbReference type="EC" id="2.1.2.9" evidence="1"/>
<dbReference type="EMBL" id="CP000487">
    <property type="protein sequence ID" value="ABK81899.1"/>
    <property type="molecule type" value="Genomic_DNA"/>
</dbReference>
<dbReference type="RefSeq" id="WP_002850551.1">
    <property type="nucleotide sequence ID" value="NC_008599.1"/>
</dbReference>
<dbReference type="SMR" id="A0RR35"/>
<dbReference type="GeneID" id="61065351"/>
<dbReference type="KEGG" id="cff:CFF8240_1534"/>
<dbReference type="eggNOG" id="COG0223">
    <property type="taxonomic scope" value="Bacteria"/>
</dbReference>
<dbReference type="HOGENOM" id="CLU_033347_1_1_7"/>
<dbReference type="Proteomes" id="UP000000760">
    <property type="component" value="Chromosome"/>
</dbReference>
<dbReference type="GO" id="GO:0005829">
    <property type="term" value="C:cytosol"/>
    <property type="evidence" value="ECO:0007669"/>
    <property type="project" value="TreeGrafter"/>
</dbReference>
<dbReference type="GO" id="GO:0004479">
    <property type="term" value="F:methionyl-tRNA formyltransferase activity"/>
    <property type="evidence" value="ECO:0007669"/>
    <property type="project" value="UniProtKB-UniRule"/>
</dbReference>
<dbReference type="CDD" id="cd08646">
    <property type="entry name" value="FMT_core_Met-tRNA-FMT_N"/>
    <property type="match status" value="1"/>
</dbReference>
<dbReference type="CDD" id="cd08704">
    <property type="entry name" value="Met_tRNA_FMT_C"/>
    <property type="match status" value="1"/>
</dbReference>
<dbReference type="Gene3D" id="3.40.50.12230">
    <property type="match status" value="1"/>
</dbReference>
<dbReference type="HAMAP" id="MF_00182">
    <property type="entry name" value="Formyl_trans"/>
    <property type="match status" value="1"/>
</dbReference>
<dbReference type="InterPro" id="IPR005794">
    <property type="entry name" value="Fmt"/>
</dbReference>
<dbReference type="InterPro" id="IPR005793">
    <property type="entry name" value="Formyl_trans_C"/>
</dbReference>
<dbReference type="InterPro" id="IPR002376">
    <property type="entry name" value="Formyl_transf_N"/>
</dbReference>
<dbReference type="InterPro" id="IPR036477">
    <property type="entry name" value="Formyl_transf_N_sf"/>
</dbReference>
<dbReference type="InterPro" id="IPR011034">
    <property type="entry name" value="Formyl_transferase-like_C_sf"/>
</dbReference>
<dbReference type="InterPro" id="IPR044135">
    <property type="entry name" value="Met-tRNA-FMT_C"/>
</dbReference>
<dbReference type="InterPro" id="IPR041711">
    <property type="entry name" value="Met-tRNA-FMT_N"/>
</dbReference>
<dbReference type="NCBIfam" id="TIGR00460">
    <property type="entry name" value="fmt"/>
    <property type="match status" value="1"/>
</dbReference>
<dbReference type="PANTHER" id="PTHR11138">
    <property type="entry name" value="METHIONYL-TRNA FORMYLTRANSFERASE"/>
    <property type="match status" value="1"/>
</dbReference>
<dbReference type="PANTHER" id="PTHR11138:SF5">
    <property type="entry name" value="METHIONYL-TRNA FORMYLTRANSFERASE, MITOCHONDRIAL"/>
    <property type="match status" value="1"/>
</dbReference>
<dbReference type="Pfam" id="PF02911">
    <property type="entry name" value="Formyl_trans_C"/>
    <property type="match status" value="1"/>
</dbReference>
<dbReference type="Pfam" id="PF00551">
    <property type="entry name" value="Formyl_trans_N"/>
    <property type="match status" value="1"/>
</dbReference>
<dbReference type="SUPFAM" id="SSF50486">
    <property type="entry name" value="FMT C-terminal domain-like"/>
    <property type="match status" value="1"/>
</dbReference>
<dbReference type="SUPFAM" id="SSF53328">
    <property type="entry name" value="Formyltransferase"/>
    <property type="match status" value="1"/>
</dbReference>
<comment type="function">
    <text evidence="1">Attaches a formyl group to the free amino group of methionyl-tRNA(fMet). The formyl group appears to play a dual role in the initiator identity of N-formylmethionyl-tRNA by promoting its recognition by IF2 and preventing the misappropriation of this tRNA by the elongation apparatus.</text>
</comment>
<comment type="catalytic activity">
    <reaction evidence="1">
        <text>L-methionyl-tRNA(fMet) + (6R)-10-formyltetrahydrofolate = N-formyl-L-methionyl-tRNA(fMet) + (6S)-5,6,7,8-tetrahydrofolate + H(+)</text>
        <dbReference type="Rhea" id="RHEA:24380"/>
        <dbReference type="Rhea" id="RHEA-COMP:9952"/>
        <dbReference type="Rhea" id="RHEA-COMP:9953"/>
        <dbReference type="ChEBI" id="CHEBI:15378"/>
        <dbReference type="ChEBI" id="CHEBI:57453"/>
        <dbReference type="ChEBI" id="CHEBI:78530"/>
        <dbReference type="ChEBI" id="CHEBI:78844"/>
        <dbReference type="ChEBI" id="CHEBI:195366"/>
        <dbReference type="EC" id="2.1.2.9"/>
    </reaction>
</comment>
<comment type="similarity">
    <text evidence="1">Belongs to the Fmt family.</text>
</comment>